<gene>
    <name evidence="1" type="primary">rpoC2</name>
    <name type="ordered locus">PMN2A_1014</name>
</gene>
<feature type="chain" id="PRO_0000225328" description="DNA-directed RNA polymerase subunit beta'">
    <location>
        <begin position="1"/>
        <end position="1369"/>
    </location>
</feature>
<feature type="region of interest" description="Disordered" evidence="2">
    <location>
        <begin position="1"/>
        <end position="26"/>
    </location>
</feature>
<feature type="region of interest" description="Disordered" evidence="2">
    <location>
        <begin position="1294"/>
        <end position="1369"/>
    </location>
</feature>
<feature type="compositionally biased region" description="Basic residues" evidence="2">
    <location>
        <begin position="7"/>
        <end position="24"/>
    </location>
</feature>
<feature type="compositionally biased region" description="Acidic residues" evidence="2">
    <location>
        <begin position="1342"/>
        <end position="1351"/>
    </location>
</feature>
<feature type="compositionally biased region" description="Low complexity" evidence="2">
    <location>
        <begin position="1357"/>
        <end position="1369"/>
    </location>
</feature>
<feature type="binding site" evidence="1">
    <location>
        <position position="253"/>
    </location>
    <ligand>
        <name>Zn(2+)</name>
        <dbReference type="ChEBI" id="CHEBI:29105"/>
    </ligand>
</feature>
<feature type="binding site" evidence="1">
    <location>
        <position position="320"/>
    </location>
    <ligand>
        <name>Zn(2+)</name>
        <dbReference type="ChEBI" id="CHEBI:29105"/>
    </ligand>
</feature>
<feature type="binding site" evidence="1">
    <location>
        <position position="327"/>
    </location>
    <ligand>
        <name>Zn(2+)</name>
        <dbReference type="ChEBI" id="CHEBI:29105"/>
    </ligand>
</feature>
<feature type="binding site" evidence="1">
    <location>
        <position position="330"/>
    </location>
    <ligand>
        <name>Zn(2+)</name>
        <dbReference type="ChEBI" id="CHEBI:29105"/>
    </ligand>
</feature>
<evidence type="ECO:0000255" key="1">
    <source>
        <dbReference type="HAMAP-Rule" id="MF_01324"/>
    </source>
</evidence>
<evidence type="ECO:0000256" key="2">
    <source>
        <dbReference type="SAM" id="MobiDB-lite"/>
    </source>
</evidence>
<proteinExistence type="inferred from homology"/>
<name>RPOC2_PROMT</name>
<protein>
    <recommendedName>
        <fullName evidence="1">DNA-directed RNA polymerase subunit beta'</fullName>
        <shortName evidence="1">RNAP subunit beta'</shortName>
        <ecNumber evidence="1">2.7.7.6</ecNumber>
    </recommendedName>
    <alternativeName>
        <fullName evidence="1">RNA polymerase subunit beta'</fullName>
    </alternativeName>
    <alternativeName>
        <fullName evidence="1">Transcriptase subunit beta'</fullName>
    </alternativeName>
</protein>
<accession>Q46J24</accession>
<dbReference type="EC" id="2.7.7.6" evidence="1"/>
<dbReference type="EMBL" id="CP000095">
    <property type="protein sequence ID" value="AAZ58504.1"/>
    <property type="molecule type" value="Genomic_DNA"/>
</dbReference>
<dbReference type="RefSeq" id="WP_011295359.1">
    <property type="nucleotide sequence ID" value="NC_007335.2"/>
</dbReference>
<dbReference type="SMR" id="Q46J24"/>
<dbReference type="STRING" id="59920.PMN2A_1014"/>
<dbReference type="KEGG" id="pmn:PMN2A_1014"/>
<dbReference type="HOGENOM" id="CLU_000524_1_0_3"/>
<dbReference type="OrthoDB" id="9815296at2"/>
<dbReference type="PhylomeDB" id="Q46J24"/>
<dbReference type="Proteomes" id="UP000002535">
    <property type="component" value="Chromosome"/>
</dbReference>
<dbReference type="GO" id="GO:0000428">
    <property type="term" value="C:DNA-directed RNA polymerase complex"/>
    <property type="evidence" value="ECO:0007669"/>
    <property type="project" value="UniProtKB-KW"/>
</dbReference>
<dbReference type="GO" id="GO:0003677">
    <property type="term" value="F:DNA binding"/>
    <property type="evidence" value="ECO:0007669"/>
    <property type="project" value="UniProtKB-UniRule"/>
</dbReference>
<dbReference type="GO" id="GO:0003899">
    <property type="term" value="F:DNA-directed RNA polymerase activity"/>
    <property type="evidence" value="ECO:0007669"/>
    <property type="project" value="UniProtKB-UniRule"/>
</dbReference>
<dbReference type="GO" id="GO:0008270">
    <property type="term" value="F:zinc ion binding"/>
    <property type="evidence" value="ECO:0007669"/>
    <property type="project" value="UniProtKB-UniRule"/>
</dbReference>
<dbReference type="GO" id="GO:0006351">
    <property type="term" value="P:DNA-templated transcription"/>
    <property type="evidence" value="ECO:0007669"/>
    <property type="project" value="UniProtKB-UniRule"/>
</dbReference>
<dbReference type="CDD" id="cd02655">
    <property type="entry name" value="RNAP_beta'_C"/>
    <property type="match status" value="1"/>
</dbReference>
<dbReference type="FunFam" id="1.10.150.390:FF:000002">
    <property type="entry name" value="DNA-directed RNA polymerase subunit beta"/>
    <property type="match status" value="1"/>
</dbReference>
<dbReference type="Gene3D" id="1.10.132.30">
    <property type="match status" value="1"/>
</dbReference>
<dbReference type="Gene3D" id="1.10.150.390">
    <property type="match status" value="1"/>
</dbReference>
<dbReference type="Gene3D" id="1.10.1790.20">
    <property type="match status" value="1"/>
</dbReference>
<dbReference type="Gene3D" id="2.40.50.100">
    <property type="match status" value="1"/>
</dbReference>
<dbReference type="Gene3D" id="1.10.274.100">
    <property type="entry name" value="RNA polymerase Rpb1, domain 3"/>
    <property type="match status" value="1"/>
</dbReference>
<dbReference type="HAMAP" id="MF_01324">
    <property type="entry name" value="RNApol_bact_RpoC2"/>
    <property type="match status" value="1"/>
</dbReference>
<dbReference type="InterPro" id="IPR012756">
    <property type="entry name" value="DNA-dir_RpoC2_beta_pp"/>
</dbReference>
<dbReference type="InterPro" id="IPR045867">
    <property type="entry name" value="DNA-dir_RpoC_beta_prime"/>
</dbReference>
<dbReference type="InterPro" id="IPR007066">
    <property type="entry name" value="RNA_pol_Rpb1_3"/>
</dbReference>
<dbReference type="InterPro" id="IPR042102">
    <property type="entry name" value="RNA_pol_Rpb1_3_sf"/>
</dbReference>
<dbReference type="InterPro" id="IPR007083">
    <property type="entry name" value="RNA_pol_Rpb1_4"/>
</dbReference>
<dbReference type="InterPro" id="IPR007081">
    <property type="entry name" value="RNA_pol_Rpb1_5"/>
</dbReference>
<dbReference type="InterPro" id="IPR038120">
    <property type="entry name" value="Rpb1_funnel_sf"/>
</dbReference>
<dbReference type="NCBIfam" id="NF002724">
    <property type="entry name" value="PRK02597.1"/>
    <property type="match status" value="1"/>
</dbReference>
<dbReference type="NCBIfam" id="TIGR02388">
    <property type="entry name" value="rpoC2_cyan"/>
    <property type="match status" value="1"/>
</dbReference>
<dbReference type="PANTHER" id="PTHR19376">
    <property type="entry name" value="DNA-DIRECTED RNA POLYMERASE"/>
    <property type="match status" value="1"/>
</dbReference>
<dbReference type="PANTHER" id="PTHR19376:SF54">
    <property type="entry name" value="DNA-DIRECTED RNA POLYMERASE SUBUNIT BETA"/>
    <property type="match status" value="1"/>
</dbReference>
<dbReference type="Pfam" id="PF04983">
    <property type="entry name" value="RNA_pol_Rpb1_3"/>
    <property type="match status" value="1"/>
</dbReference>
<dbReference type="Pfam" id="PF05000">
    <property type="entry name" value="RNA_pol_Rpb1_4"/>
    <property type="match status" value="1"/>
</dbReference>
<dbReference type="Pfam" id="PF04998">
    <property type="entry name" value="RNA_pol_Rpb1_5"/>
    <property type="match status" value="2"/>
</dbReference>
<dbReference type="SUPFAM" id="SSF64484">
    <property type="entry name" value="beta and beta-prime subunits of DNA dependent RNA-polymerase"/>
    <property type="match status" value="1"/>
</dbReference>
<sequence length="1369" mass="149752">MTSSSPKTRKSSTKSKAKRGSKSKKAAEIIAVQRLSKTPPPFRNKVVDKKVLKNLVAWAFKHHGTAATAAMADNLKDLGFRYATQAAVSISVDDLKVPEAKQDLLGQAEELITATEECYRLGEITEVERHTKVIDTWTETNERLVDAVKKNFNQNDPLNSVWMMANSGARGNMSQVRQLVGMRGLMANPQGEIIDLPIRTNFREGLTVTEYVISSYGARKGLVDTALRTADSGYLTRRLVDVAQDVIVREEDCGTTRSILISAEDGKFGNRLVGRLTSEQVVNADEEVLAERDTPIDPQLSKKFEQSNMQGVRVRSPLTCEATRSVCRKCYGWALAHNQLVDLGEAVGIVAAQSIGEPGTQLTMRTFHTGGVSTAETGVVRSTLSGKVEFGSKARVRGYRTPHGVEAQQAEVDFNLSIVPTSGGKPQKIDIPIGSLLFVDNGQNIDIDVTVAQIASGTVQKSVEKATKDVICDLAGQVRYETIIQPREVTDRQGNITLKAQRLGRLWVLAGDVYNLPPNALPVVSGNVSVKEGQVLAEASQASEFGGEVRLRDSIGDSREVQIVTTSMTLDDFKLLEESTHSGEIWHLEAQDNTRYRLNTIPGSKIGNNEVIAELSDDRFKTETGGLIKYAPGLTIKKARSAKNGYEVSKGGTLLWIPQETHEINKDISLLMIKDRQWIEAGTEVVKDIFSQTAGIVTVTQKNDILREIIVRSGTFKLCKESKALDRFEGDGQIVNPGETIAKGIKTDSMVMVQSVETPEGKGLLLRSVEEFNIPDQAQLPELKHVKQPKGPSLGVKASQRLAYKDGELIKSVEGVELLKTQLMLETFDTTPQMTVDVEVIQDLNSKGDRLKLVILESILVRRDTTSDSSHGSTHTELQIENAQVVSAGDVVATTQILCKQEGVVQLPDAVDGDPVRRLIVEREEDTITIDSKGTTLLKVGQRVVDGDFVSKDQSIDACGEIENIDGKKVKLRLGRPYMVSPDSVLHVRDGDLVQRGDGLALLVFERQKTGDIVQGLPRIEELLEARRPRDSAILCKKSGTVDIKKGDDDDSVVVSIIEDNDVISEYPILLGRNVMVRNSQQVIAGEFLTDGPVNPHELLECFFTDLRDKKPLMDAAQEAIAKLQHRMVSEVQNVYKSQGVAIDDKHIEVIVRQMTSKVRIEDAGDTTFLPGELIELRQVEDTNQAISITGGAPSEFTPVLLGITKASLNTDSFISAASFQETTRVLTEAAIEGKSDWLRGLKENVIIGRLIPAGTGFSGFVEELNAEAGPHPDILAEDPAGYRRIQNLRPDYTVDMPSSPVAKNTAVLDDPSEEDLEATRSRHGIDPTTSNFAAFARPVGDDELSAEDQMPDPAALEGLQEEGLLSDE</sequence>
<reference key="1">
    <citation type="journal article" date="2007" name="PLoS Genet.">
        <title>Patterns and implications of gene gain and loss in the evolution of Prochlorococcus.</title>
        <authorList>
            <person name="Kettler G.C."/>
            <person name="Martiny A.C."/>
            <person name="Huang K."/>
            <person name="Zucker J."/>
            <person name="Coleman M.L."/>
            <person name="Rodrigue S."/>
            <person name="Chen F."/>
            <person name="Lapidus A."/>
            <person name="Ferriera S."/>
            <person name="Johnson J."/>
            <person name="Steglich C."/>
            <person name="Church G.M."/>
            <person name="Richardson P."/>
            <person name="Chisholm S.W."/>
        </authorList>
    </citation>
    <scope>NUCLEOTIDE SEQUENCE [LARGE SCALE GENOMIC DNA]</scope>
    <source>
        <strain>NATL2A</strain>
    </source>
</reference>
<organism>
    <name type="scientific">Prochlorococcus marinus (strain NATL2A)</name>
    <dbReference type="NCBI Taxonomy" id="59920"/>
    <lineage>
        <taxon>Bacteria</taxon>
        <taxon>Bacillati</taxon>
        <taxon>Cyanobacteriota</taxon>
        <taxon>Cyanophyceae</taxon>
        <taxon>Synechococcales</taxon>
        <taxon>Prochlorococcaceae</taxon>
        <taxon>Prochlorococcus</taxon>
    </lineage>
</organism>
<keyword id="KW-0240">DNA-directed RNA polymerase</keyword>
<keyword id="KW-0479">Metal-binding</keyword>
<keyword id="KW-0548">Nucleotidyltransferase</keyword>
<keyword id="KW-1185">Reference proteome</keyword>
<keyword id="KW-0804">Transcription</keyword>
<keyword id="KW-0808">Transferase</keyword>
<keyword id="KW-0862">Zinc</keyword>
<comment type="function">
    <text evidence="1">DNA-dependent RNA polymerase catalyzes the transcription of DNA into RNA using the four ribonucleoside triphosphates as substrates.</text>
</comment>
<comment type="catalytic activity">
    <reaction evidence="1">
        <text>RNA(n) + a ribonucleoside 5'-triphosphate = RNA(n+1) + diphosphate</text>
        <dbReference type="Rhea" id="RHEA:21248"/>
        <dbReference type="Rhea" id="RHEA-COMP:14527"/>
        <dbReference type="Rhea" id="RHEA-COMP:17342"/>
        <dbReference type="ChEBI" id="CHEBI:33019"/>
        <dbReference type="ChEBI" id="CHEBI:61557"/>
        <dbReference type="ChEBI" id="CHEBI:140395"/>
        <dbReference type="EC" id="2.7.7.6"/>
    </reaction>
</comment>
<comment type="cofactor">
    <cofactor evidence="1">
        <name>Zn(2+)</name>
        <dbReference type="ChEBI" id="CHEBI:29105"/>
    </cofactor>
    <text evidence="1">Binds 1 Zn(2+) ion per subunit.</text>
</comment>
<comment type="subunit">
    <text evidence="1">In cyanobacteria the RNAP catalytic core is composed of 2 alpha, 1 beta, 1 beta', 1 gamma and 1 omega subunit. When a sigma factor is associated with the core the holoenzyme is formed, which can initiate transcription.</text>
</comment>
<comment type="similarity">
    <text evidence="1">Belongs to the RNA polymerase beta' chain family. RpoC2 subfamily.</text>
</comment>